<accession>B4S6K6</accession>
<evidence type="ECO:0000255" key="1">
    <source>
        <dbReference type="HAMAP-Rule" id="MF_00568"/>
    </source>
</evidence>
<gene>
    <name evidence="1" type="primary">nadA</name>
    <name type="ordered locus">Paes_0714</name>
</gene>
<organism>
    <name type="scientific">Prosthecochloris aestuarii (strain DSM 271 / SK 413)</name>
    <dbReference type="NCBI Taxonomy" id="290512"/>
    <lineage>
        <taxon>Bacteria</taxon>
        <taxon>Pseudomonadati</taxon>
        <taxon>Chlorobiota</taxon>
        <taxon>Chlorobiia</taxon>
        <taxon>Chlorobiales</taxon>
        <taxon>Chlorobiaceae</taxon>
        <taxon>Prosthecochloris</taxon>
    </lineage>
</organism>
<proteinExistence type="inferred from homology"/>
<sequence>MTALQPYTIPSQDDRQSVLADKIKRLREERNAIILAHYYTVPEIQQVADVVGDSLALARAAETTDADVIVFAGVYFMGETAKILNPGKTVLMPDNSAGCPLADSCPADRFRSFREQYPDALVISYINSTAEIKAESDIICTSSNAVDIVSQIPSDKRIIFGPDRNLGSYVMQQLEREMILWQGFCYVHESYSWDVIETAVRQFPDAQLIAHPECRREVLDHADFVGSTGALLAYSQKSPADAFIVATEPGILYEMKKRSPEKSFIAAPKDIVSSQSVCSQMKQNTMENLCNCLETMAPQIVVDETLAAGALKSIRKMLEMSK</sequence>
<keyword id="KW-0004">4Fe-4S</keyword>
<keyword id="KW-0963">Cytoplasm</keyword>
<keyword id="KW-0408">Iron</keyword>
<keyword id="KW-0411">Iron-sulfur</keyword>
<keyword id="KW-0479">Metal-binding</keyword>
<keyword id="KW-0662">Pyridine nucleotide biosynthesis</keyword>
<keyword id="KW-0808">Transferase</keyword>
<reference key="1">
    <citation type="submission" date="2008-06" db="EMBL/GenBank/DDBJ databases">
        <title>Complete sequence of chromosome of Prosthecochloris aestuarii DSM 271.</title>
        <authorList>
            <consortium name="US DOE Joint Genome Institute"/>
            <person name="Lucas S."/>
            <person name="Copeland A."/>
            <person name="Lapidus A."/>
            <person name="Glavina del Rio T."/>
            <person name="Dalin E."/>
            <person name="Tice H."/>
            <person name="Bruce D."/>
            <person name="Goodwin L."/>
            <person name="Pitluck S."/>
            <person name="Schmutz J."/>
            <person name="Larimer F."/>
            <person name="Land M."/>
            <person name="Hauser L."/>
            <person name="Kyrpides N."/>
            <person name="Anderson I."/>
            <person name="Liu Z."/>
            <person name="Li T."/>
            <person name="Zhao F."/>
            <person name="Overmann J."/>
            <person name="Bryant D.A."/>
            <person name="Richardson P."/>
        </authorList>
    </citation>
    <scope>NUCLEOTIDE SEQUENCE [LARGE SCALE GENOMIC DNA]</scope>
    <source>
        <strain>DSM 271 / SK 413</strain>
    </source>
</reference>
<protein>
    <recommendedName>
        <fullName evidence="1">Quinolinate synthase</fullName>
        <ecNumber evidence="1">2.5.1.72</ecNumber>
    </recommendedName>
</protein>
<comment type="function">
    <text evidence="1">Catalyzes the condensation of iminoaspartate with dihydroxyacetone phosphate to form quinolinate.</text>
</comment>
<comment type="catalytic activity">
    <reaction evidence="1">
        <text>iminosuccinate + dihydroxyacetone phosphate = quinolinate + phosphate + 2 H2O + H(+)</text>
        <dbReference type="Rhea" id="RHEA:25888"/>
        <dbReference type="ChEBI" id="CHEBI:15377"/>
        <dbReference type="ChEBI" id="CHEBI:15378"/>
        <dbReference type="ChEBI" id="CHEBI:29959"/>
        <dbReference type="ChEBI" id="CHEBI:43474"/>
        <dbReference type="ChEBI" id="CHEBI:57642"/>
        <dbReference type="ChEBI" id="CHEBI:77875"/>
        <dbReference type="EC" id="2.5.1.72"/>
    </reaction>
    <physiologicalReaction direction="left-to-right" evidence="1">
        <dbReference type="Rhea" id="RHEA:25889"/>
    </physiologicalReaction>
</comment>
<comment type="cofactor">
    <cofactor evidence="1">
        <name>[4Fe-4S] cluster</name>
        <dbReference type="ChEBI" id="CHEBI:49883"/>
    </cofactor>
    <text evidence="1">Binds 1 [4Fe-4S] cluster per subunit.</text>
</comment>
<comment type="pathway">
    <text evidence="1">Cofactor biosynthesis; NAD(+) biosynthesis; quinolinate from iminoaspartate: step 1/1.</text>
</comment>
<comment type="subcellular location">
    <subcellularLocation>
        <location evidence="1">Cytoplasm</location>
    </subcellularLocation>
</comment>
<comment type="similarity">
    <text evidence="1">Belongs to the quinolinate synthase family. Type 2 subfamily.</text>
</comment>
<dbReference type="EC" id="2.5.1.72" evidence="1"/>
<dbReference type="EMBL" id="CP001108">
    <property type="protein sequence ID" value="ACF45761.1"/>
    <property type="molecule type" value="Genomic_DNA"/>
</dbReference>
<dbReference type="RefSeq" id="WP_012505298.1">
    <property type="nucleotide sequence ID" value="NC_011059.1"/>
</dbReference>
<dbReference type="SMR" id="B4S6K6"/>
<dbReference type="STRING" id="290512.Paes_0714"/>
<dbReference type="KEGG" id="paa:Paes_0714"/>
<dbReference type="eggNOG" id="COG0379">
    <property type="taxonomic scope" value="Bacteria"/>
</dbReference>
<dbReference type="HOGENOM" id="CLU_047382_0_0_10"/>
<dbReference type="UniPathway" id="UPA00253">
    <property type="reaction ID" value="UER00327"/>
</dbReference>
<dbReference type="Proteomes" id="UP000002725">
    <property type="component" value="Chromosome"/>
</dbReference>
<dbReference type="GO" id="GO:0005829">
    <property type="term" value="C:cytosol"/>
    <property type="evidence" value="ECO:0007669"/>
    <property type="project" value="TreeGrafter"/>
</dbReference>
<dbReference type="GO" id="GO:0051539">
    <property type="term" value="F:4 iron, 4 sulfur cluster binding"/>
    <property type="evidence" value="ECO:0007669"/>
    <property type="project" value="UniProtKB-KW"/>
</dbReference>
<dbReference type="GO" id="GO:0046872">
    <property type="term" value="F:metal ion binding"/>
    <property type="evidence" value="ECO:0007669"/>
    <property type="project" value="UniProtKB-KW"/>
</dbReference>
<dbReference type="GO" id="GO:0008987">
    <property type="term" value="F:quinolinate synthetase A activity"/>
    <property type="evidence" value="ECO:0007669"/>
    <property type="project" value="UniProtKB-UniRule"/>
</dbReference>
<dbReference type="GO" id="GO:0034628">
    <property type="term" value="P:'de novo' NAD biosynthetic process from L-aspartate"/>
    <property type="evidence" value="ECO:0007669"/>
    <property type="project" value="TreeGrafter"/>
</dbReference>
<dbReference type="FunFam" id="3.40.50.10800:FF:000003">
    <property type="entry name" value="Quinolinate synthase A"/>
    <property type="match status" value="1"/>
</dbReference>
<dbReference type="Gene3D" id="3.40.50.10800">
    <property type="entry name" value="NadA-like"/>
    <property type="match status" value="3"/>
</dbReference>
<dbReference type="HAMAP" id="MF_00568">
    <property type="entry name" value="NadA_type2"/>
    <property type="match status" value="1"/>
</dbReference>
<dbReference type="InterPro" id="IPR003473">
    <property type="entry name" value="NadA"/>
</dbReference>
<dbReference type="InterPro" id="IPR036094">
    <property type="entry name" value="NadA_sf"/>
</dbReference>
<dbReference type="InterPro" id="IPR023066">
    <property type="entry name" value="Quinolinate_synth_type2"/>
</dbReference>
<dbReference type="NCBIfam" id="TIGR00550">
    <property type="entry name" value="nadA"/>
    <property type="match status" value="1"/>
</dbReference>
<dbReference type="NCBIfam" id="NF006878">
    <property type="entry name" value="PRK09375.1-2"/>
    <property type="match status" value="1"/>
</dbReference>
<dbReference type="PANTHER" id="PTHR30573:SF0">
    <property type="entry name" value="QUINOLINATE SYNTHASE, CHLOROPLASTIC"/>
    <property type="match status" value="1"/>
</dbReference>
<dbReference type="PANTHER" id="PTHR30573">
    <property type="entry name" value="QUINOLINATE SYNTHETASE A"/>
    <property type="match status" value="1"/>
</dbReference>
<dbReference type="Pfam" id="PF02445">
    <property type="entry name" value="NadA"/>
    <property type="match status" value="1"/>
</dbReference>
<dbReference type="SUPFAM" id="SSF142754">
    <property type="entry name" value="NadA-like"/>
    <property type="match status" value="1"/>
</dbReference>
<name>NADA_PROA2</name>
<feature type="chain" id="PRO_1000129440" description="Quinolinate synthase">
    <location>
        <begin position="1"/>
        <end position="322"/>
    </location>
</feature>
<feature type="binding site" evidence="1">
    <location>
        <position position="37"/>
    </location>
    <ligand>
        <name>iminosuccinate</name>
        <dbReference type="ChEBI" id="CHEBI:77875"/>
    </ligand>
</feature>
<feature type="binding site" evidence="1">
    <location>
        <position position="54"/>
    </location>
    <ligand>
        <name>iminosuccinate</name>
        <dbReference type="ChEBI" id="CHEBI:77875"/>
    </ligand>
</feature>
<feature type="binding site" evidence="1">
    <location>
        <position position="99"/>
    </location>
    <ligand>
        <name>[4Fe-4S] cluster</name>
        <dbReference type="ChEBI" id="CHEBI:49883"/>
    </ligand>
</feature>
<feature type="binding site" evidence="1">
    <location>
        <begin position="125"/>
        <end position="127"/>
    </location>
    <ligand>
        <name>iminosuccinate</name>
        <dbReference type="ChEBI" id="CHEBI:77875"/>
    </ligand>
</feature>
<feature type="binding site" evidence="1">
    <location>
        <position position="142"/>
    </location>
    <ligand>
        <name>iminosuccinate</name>
        <dbReference type="ChEBI" id="CHEBI:77875"/>
    </ligand>
</feature>
<feature type="binding site" evidence="1">
    <location>
        <position position="185"/>
    </location>
    <ligand>
        <name>[4Fe-4S] cluster</name>
        <dbReference type="ChEBI" id="CHEBI:49883"/>
    </ligand>
</feature>
<feature type="binding site" evidence="1">
    <location>
        <begin position="211"/>
        <end position="213"/>
    </location>
    <ligand>
        <name>iminosuccinate</name>
        <dbReference type="ChEBI" id="CHEBI:77875"/>
    </ligand>
</feature>
<feature type="binding site" evidence="1">
    <location>
        <position position="228"/>
    </location>
    <ligand>
        <name>iminosuccinate</name>
        <dbReference type="ChEBI" id="CHEBI:77875"/>
    </ligand>
</feature>
<feature type="binding site" evidence="1">
    <location>
        <position position="278"/>
    </location>
    <ligand>
        <name>[4Fe-4S] cluster</name>
        <dbReference type="ChEBI" id="CHEBI:49883"/>
    </ligand>
</feature>